<reference key="1">
    <citation type="submission" date="2001-01" db="EMBL/GenBank/DDBJ databases">
        <title>Molecular characterization of important regions of the Lumpy skin disease virus genome.</title>
        <authorList>
            <person name="Stipinovich C."/>
            <person name="Vreede F.T."/>
            <person name="Kara P.D."/>
            <person name="Wallace D.B."/>
            <person name="Nel L.H."/>
            <person name="Viljoen G.J."/>
        </authorList>
    </citation>
    <scope>NUCLEOTIDE SEQUENCE [GENOMIC DNA]</scope>
    <source>
        <strain>Neethling</strain>
    </source>
</reference>
<reference key="2">
    <citation type="journal article" date="2003" name="Arch. Virol.">
        <title>Comparative sequence analysis of the South African vaccine strain and two virulent field isolates of Lumpy skin disease virus.</title>
        <authorList>
            <person name="Kara P.D."/>
            <person name="Afonso C.L."/>
            <person name="Wallace D.B."/>
            <person name="Kutish G.F."/>
            <person name="Abolnik C."/>
            <person name="Lu Z."/>
            <person name="Vreede F.T."/>
            <person name="Taljaard L.C.F."/>
            <person name="Zsak A."/>
            <person name="Viljoen G.J."/>
            <person name="Rock D.L."/>
        </authorList>
    </citation>
    <scope>NUCLEOTIDE SEQUENCE [LARGE SCALE GENOMIC DNA]</scope>
    <source>
        <strain>Isolate Neethling vaccine LW 1959</strain>
    </source>
</reference>
<evidence type="ECO:0000250" key="1"/>
<evidence type="ECO:0000255" key="2"/>
<evidence type="ECO:0000255" key="3">
    <source>
        <dbReference type="PROSITE-ProRule" id="PRU00623"/>
    </source>
</evidence>
<evidence type="ECO:0000305" key="4"/>
<dbReference type="EC" id="2.3.2.27"/>
<dbReference type="EMBL" id="AH010683">
    <property type="protein sequence ID" value="AAK43550.1"/>
    <property type="molecule type" value="Genomic_DNA"/>
</dbReference>
<dbReference type="EMBL" id="AF409138">
    <property type="protein sequence ID" value="AAN02734.1"/>
    <property type="molecule type" value="Genomic_DNA"/>
</dbReference>
<dbReference type="SMR" id="Q91T40"/>
<dbReference type="Proteomes" id="UP000156762">
    <property type="component" value="Segment"/>
</dbReference>
<dbReference type="GO" id="GO:0044174">
    <property type="term" value="C:host cell endosome"/>
    <property type="evidence" value="ECO:0007669"/>
    <property type="project" value="UniProtKB-KW"/>
</dbReference>
<dbReference type="GO" id="GO:0044177">
    <property type="term" value="C:host cell Golgi apparatus"/>
    <property type="evidence" value="ECO:0007669"/>
    <property type="project" value="UniProtKB-SubCell"/>
</dbReference>
<dbReference type="GO" id="GO:0033644">
    <property type="term" value="C:host cell membrane"/>
    <property type="evidence" value="ECO:0007669"/>
    <property type="project" value="UniProtKB-SubCell"/>
</dbReference>
<dbReference type="GO" id="GO:0016020">
    <property type="term" value="C:membrane"/>
    <property type="evidence" value="ECO:0007669"/>
    <property type="project" value="UniProtKB-KW"/>
</dbReference>
<dbReference type="GO" id="GO:0016740">
    <property type="term" value="F:transferase activity"/>
    <property type="evidence" value="ECO:0007669"/>
    <property type="project" value="UniProtKB-KW"/>
</dbReference>
<dbReference type="GO" id="GO:0008270">
    <property type="term" value="F:zinc ion binding"/>
    <property type="evidence" value="ECO:0007669"/>
    <property type="project" value="UniProtKB-KW"/>
</dbReference>
<dbReference type="GO" id="GO:0039648">
    <property type="term" value="P:symbiont-mediated perturbation of host ubiquitin-like protein modification"/>
    <property type="evidence" value="ECO:0007669"/>
    <property type="project" value="UniProtKB-KW"/>
</dbReference>
<dbReference type="GO" id="GO:0046776">
    <property type="term" value="P:symbiont-mediated suppression of host antigen processing and presentation of peptide antigen via MHC class I"/>
    <property type="evidence" value="ECO:0007669"/>
    <property type="project" value="UniProtKB-KW"/>
</dbReference>
<dbReference type="Gene3D" id="3.30.40.10">
    <property type="entry name" value="Zinc/RING finger domain, C3HC4 (zinc finger)"/>
    <property type="match status" value="1"/>
</dbReference>
<dbReference type="InterPro" id="IPR011016">
    <property type="entry name" value="Znf_RING-CH"/>
</dbReference>
<dbReference type="InterPro" id="IPR013083">
    <property type="entry name" value="Znf_RING/FYVE/PHD"/>
</dbReference>
<dbReference type="PANTHER" id="PTHR46065">
    <property type="entry name" value="E3 UBIQUITIN-PROTEIN LIGASE MARCH 2/3 FAMILY MEMBER"/>
    <property type="match status" value="1"/>
</dbReference>
<dbReference type="PANTHER" id="PTHR46065:SF3">
    <property type="entry name" value="FI20425P1"/>
    <property type="match status" value="1"/>
</dbReference>
<dbReference type="Pfam" id="PF12906">
    <property type="entry name" value="RINGv"/>
    <property type="match status" value="1"/>
</dbReference>
<dbReference type="SMART" id="SM00744">
    <property type="entry name" value="RINGv"/>
    <property type="match status" value="1"/>
</dbReference>
<dbReference type="SUPFAM" id="SSF57850">
    <property type="entry name" value="RING/U-box"/>
    <property type="match status" value="1"/>
</dbReference>
<dbReference type="PROSITE" id="PS51292">
    <property type="entry name" value="ZF_RING_CH"/>
    <property type="match status" value="1"/>
</dbReference>
<name>LAP_LSDV</name>
<protein>
    <recommendedName>
        <fullName>E3 ubiquitin-protein ligase LAP</fullName>
        <ecNumber>2.3.2.27</ecNumber>
    </recommendedName>
    <alternativeName>
        <fullName>Leukemia associated protein</fullName>
        <shortName>LAP</shortName>
    </alternativeName>
    <alternativeName>
        <fullName evidence="4">RING-type E3 ubiquitin transferase LAP</fullName>
    </alternativeName>
</protein>
<comment type="function">
    <text evidence="1">E3 ubiquitin-protein ligase which promotes ubiquitination and subsequent degradation of host MHC-I and CD4 molecules, presumably to prevent lysis of infected cells by cytotoxic T-lymphocytes and NK cell. Binds target molecules through transmembrane interaction. The result of this ubiquitination is the enhancement of the endocytosis of the target chain and the delivery to the lysosome, where it is proteolytically destroyed (By similarity).</text>
</comment>
<comment type="catalytic activity">
    <reaction>
        <text>S-ubiquitinyl-[E2 ubiquitin-conjugating enzyme]-L-cysteine + [acceptor protein]-L-lysine = [E2 ubiquitin-conjugating enzyme]-L-cysteine + N(6)-ubiquitinyl-[acceptor protein]-L-lysine.</text>
        <dbReference type="EC" id="2.3.2.27"/>
    </reaction>
</comment>
<comment type="subcellular location">
    <subcellularLocation>
        <location evidence="4">Host membrane</location>
        <topology evidence="4">Multi-pass membrane protein</topology>
    </subcellularLocation>
    <subcellularLocation>
        <location>Host Golgi apparatus</location>
        <location>Host trans-Golgi network membrane</location>
    </subcellularLocation>
    <subcellularLocation>
        <location evidence="1">Host early endosome membrane</location>
    </subcellularLocation>
</comment>
<comment type="domain">
    <text evidence="3">The RING-CH-type zinc finger domain is required for E3 ligase activity.</text>
</comment>
<comment type="similarity">
    <text evidence="4">Belongs to the poxviridae LAP protein family.</text>
</comment>
<organism>
    <name type="scientific">Lumpy skin disease virus</name>
    <name type="common">LSDV</name>
    <dbReference type="NCBI Taxonomy" id="59509"/>
    <lineage>
        <taxon>Viruses</taxon>
        <taxon>Varidnaviria</taxon>
        <taxon>Bamfordvirae</taxon>
        <taxon>Nucleocytoviricota</taxon>
        <taxon>Pokkesviricetes</taxon>
        <taxon>Chitovirales</taxon>
        <taxon>Poxviridae</taxon>
        <taxon>Chordopoxvirinae</taxon>
        <taxon>Capripoxvirus</taxon>
    </lineage>
</organism>
<sequence>MEGSDNTNTHCWICKDEYNVSTNFCNCKNEFKIVHKNCLEEWINFSHNTKCKICNGKYNIKKNKKSCLRWKCSFMYCNVPAICVSLICLLLLPLTILLVKFNLKSMLENIENRDLIALISAMAYSLPCVVGFITVVHILIALYDYYLAAKSDNTTYQVYEYI</sequence>
<feature type="chain" id="PRO_0000396003" description="E3 ubiquitin-protein ligase LAP">
    <location>
        <begin position="1"/>
        <end position="162"/>
    </location>
</feature>
<feature type="topological domain" description="Cytoplasmic" evidence="2">
    <location>
        <begin position="1"/>
        <end position="78"/>
    </location>
</feature>
<feature type="transmembrane region" description="Helical" evidence="2">
    <location>
        <begin position="79"/>
        <end position="99"/>
    </location>
</feature>
<feature type="topological domain" description="Lumenal" evidence="2">
    <location>
        <begin position="100"/>
        <end position="121"/>
    </location>
</feature>
<feature type="transmembrane region" description="Helical" evidence="2">
    <location>
        <begin position="122"/>
        <end position="142"/>
    </location>
</feature>
<feature type="topological domain" description="Cytoplasmic" evidence="2">
    <location>
        <begin position="143"/>
        <end position="162"/>
    </location>
</feature>
<feature type="zinc finger region" description="RING-CH-type" evidence="3">
    <location>
        <begin position="3"/>
        <end position="61"/>
    </location>
</feature>
<feature type="binding site" evidence="3">
    <location>
        <position position="11"/>
    </location>
    <ligand>
        <name>Zn(2+)</name>
        <dbReference type="ChEBI" id="CHEBI:29105"/>
        <label>1</label>
    </ligand>
</feature>
<feature type="binding site" evidence="3">
    <location>
        <position position="14"/>
    </location>
    <ligand>
        <name>Zn(2+)</name>
        <dbReference type="ChEBI" id="CHEBI:29105"/>
        <label>1</label>
    </ligand>
</feature>
<feature type="binding site" evidence="3">
    <location>
        <position position="25"/>
    </location>
    <ligand>
        <name>Zn(2+)</name>
        <dbReference type="ChEBI" id="CHEBI:29105"/>
        <label>2</label>
    </ligand>
</feature>
<feature type="binding site" evidence="3">
    <location>
        <position position="27"/>
    </location>
    <ligand>
        <name>Zn(2+)</name>
        <dbReference type="ChEBI" id="CHEBI:29105"/>
        <label>2</label>
    </ligand>
</feature>
<feature type="binding site" evidence="3">
    <location>
        <position position="35"/>
    </location>
    <ligand>
        <name>Zn(2+)</name>
        <dbReference type="ChEBI" id="CHEBI:29105"/>
        <label>1</label>
    </ligand>
</feature>
<feature type="binding site" evidence="3">
    <location>
        <position position="38"/>
    </location>
    <ligand>
        <name>Zn(2+)</name>
        <dbReference type="ChEBI" id="CHEBI:29105"/>
        <label>1</label>
    </ligand>
</feature>
<feature type="binding site" evidence="3">
    <location>
        <position position="51"/>
    </location>
    <ligand>
        <name>Zn(2+)</name>
        <dbReference type="ChEBI" id="CHEBI:29105"/>
        <label>2</label>
    </ligand>
</feature>
<feature type="binding site" evidence="3">
    <location>
        <position position="54"/>
    </location>
    <ligand>
        <name>Zn(2+)</name>
        <dbReference type="ChEBI" id="CHEBI:29105"/>
        <label>2</label>
    </ligand>
</feature>
<gene>
    <name type="primary">LW010</name>
</gene>
<proteinExistence type="inferred from homology"/>
<organismHost>
    <name type="scientific">Bos taurus</name>
    <name type="common">Bovine</name>
    <dbReference type="NCBI Taxonomy" id="9913"/>
</organismHost>
<accession>Q91T40</accession>
<keyword id="KW-1039">Host endosome</keyword>
<keyword id="KW-1040">Host Golgi apparatus</keyword>
<keyword id="KW-1043">Host membrane</keyword>
<keyword id="KW-0945">Host-virus interaction</keyword>
<keyword id="KW-1080">Inhibition of host adaptive immune response by virus</keyword>
<keyword id="KW-1115">Inhibition of host MHC class I molecule presentation by virus</keyword>
<keyword id="KW-0472">Membrane</keyword>
<keyword id="KW-0479">Metal-binding</keyword>
<keyword id="KW-1128">Modulation of host ubiquitin pathway by viral E3 ligase</keyword>
<keyword id="KW-1130">Modulation of host ubiquitin pathway by virus</keyword>
<keyword id="KW-0808">Transferase</keyword>
<keyword id="KW-0812">Transmembrane</keyword>
<keyword id="KW-1133">Transmembrane helix</keyword>
<keyword id="KW-0833">Ubl conjugation pathway</keyword>
<keyword id="KW-0899">Viral immunoevasion</keyword>
<keyword id="KW-0862">Zinc</keyword>
<keyword id="KW-0863">Zinc-finger</keyword>